<accession>O13900</accession>
<organism>
    <name type="scientific">Schizosaccharomyces pombe (strain 972 / ATCC 24843)</name>
    <name type="common">Fission yeast</name>
    <dbReference type="NCBI Taxonomy" id="284812"/>
    <lineage>
        <taxon>Eukaryota</taxon>
        <taxon>Fungi</taxon>
        <taxon>Dikarya</taxon>
        <taxon>Ascomycota</taxon>
        <taxon>Taphrinomycotina</taxon>
        <taxon>Schizosaccharomycetes</taxon>
        <taxon>Schizosaccharomycetales</taxon>
        <taxon>Schizosaccharomycetaceae</taxon>
        <taxon>Schizosaccharomyces</taxon>
    </lineage>
</organism>
<proteinExistence type="evidence at protein level"/>
<feature type="chain" id="PRO_0000290652" description="Pre-mRNA-splicing factor sap114">
    <location>
        <begin position="1"/>
        <end position="481"/>
    </location>
</feature>
<feature type="repeat" description="SURP motif 1">
    <location>
        <begin position="44"/>
        <end position="86"/>
    </location>
</feature>
<feature type="repeat" description="SURP motif 2">
    <location>
        <begin position="147"/>
        <end position="189"/>
    </location>
</feature>
<feature type="region of interest" description="Disordered" evidence="2">
    <location>
        <begin position="1"/>
        <end position="34"/>
    </location>
</feature>
<feature type="region of interest" description="Disordered" evidence="2">
    <location>
        <begin position="335"/>
        <end position="373"/>
    </location>
</feature>
<feature type="region of interest" description="Disordered" evidence="2">
    <location>
        <begin position="452"/>
        <end position="481"/>
    </location>
</feature>
<feature type="compositionally biased region" description="Polar residues" evidence="2">
    <location>
        <begin position="1"/>
        <end position="15"/>
    </location>
</feature>
<feature type="compositionally biased region" description="Polar residues" evidence="2">
    <location>
        <begin position="345"/>
        <end position="368"/>
    </location>
</feature>
<feature type="compositionally biased region" description="Polar residues" evidence="2">
    <location>
        <begin position="467"/>
        <end position="481"/>
    </location>
</feature>
<keyword id="KW-0143">Chaperone</keyword>
<keyword id="KW-0507">mRNA processing</keyword>
<keyword id="KW-0508">mRNA splicing</keyword>
<keyword id="KW-0539">Nucleus</keyword>
<keyword id="KW-1185">Reference proteome</keyword>
<keyword id="KW-0677">Repeat</keyword>
<keyword id="KW-0747">Spliceosome</keyword>
<dbReference type="EMBL" id="CU329670">
    <property type="protein sequence ID" value="CAB16579.1"/>
    <property type="molecule type" value="Genomic_DNA"/>
</dbReference>
<dbReference type="PIR" id="T38149">
    <property type="entry name" value="T38149"/>
</dbReference>
<dbReference type="RefSeq" id="NP_593239.1">
    <property type="nucleotide sequence ID" value="NM_001018636.2"/>
</dbReference>
<dbReference type="SMR" id="O13900"/>
<dbReference type="BioGRID" id="277942">
    <property type="interactions" value="203"/>
</dbReference>
<dbReference type="FunCoup" id="O13900">
    <property type="interactions" value="851"/>
</dbReference>
<dbReference type="IntAct" id="O13900">
    <property type="interactions" value="4"/>
</dbReference>
<dbReference type="STRING" id="284812.O13900"/>
<dbReference type="iPTMnet" id="O13900"/>
<dbReference type="PaxDb" id="4896-SPAC22A12.09c.1"/>
<dbReference type="EnsemblFungi" id="SPAC22A12.09c.1">
    <property type="protein sequence ID" value="SPAC22A12.09c.1:pep"/>
    <property type="gene ID" value="SPAC22A12.09c"/>
</dbReference>
<dbReference type="GeneID" id="2541437"/>
<dbReference type="KEGG" id="spo:2541437"/>
<dbReference type="PomBase" id="SPAC22A12.09c">
    <property type="gene designation" value="sap114"/>
</dbReference>
<dbReference type="VEuPathDB" id="FungiDB:SPAC22A12.09c"/>
<dbReference type="eggNOG" id="KOG0007">
    <property type="taxonomic scope" value="Eukaryota"/>
</dbReference>
<dbReference type="HOGENOM" id="CLU_013259_3_1_1"/>
<dbReference type="InParanoid" id="O13900"/>
<dbReference type="OMA" id="VKYQEQQ"/>
<dbReference type="PhylomeDB" id="O13900"/>
<dbReference type="PRO" id="PR:O13900"/>
<dbReference type="Proteomes" id="UP000002485">
    <property type="component" value="Chromosome I"/>
</dbReference>
<dbReference type="GO" id="GO:0071013">
    <property type="term" value="C:catalytic step 2 spliceosome"/>
    <property type="evidence" value="ECO:0000318"/>
    <property type="project" value="GO_Central"/>
</dbReference>
<dbReference type="GO" id="GO:0005634">
    <property type="term" value="C:nucleus"/>
    <property type="evidence" value="ECO:0007005"/>
    <property type="project" value="PomBase"/>
</dbReference>
<dbReference type="GO" id="GO:0005686">
    <property type="term" value="C:U2 snRNP"/>
    <property type="evidence" value="ECO:0000314"/>
    <property type="project" value="PomBase"/>
</dbReference>
<dbReference type="GO" id="GO:0071004">
    <property type="term" value="C:U2-type prespliceosome"/>
    <property type="evidence" value="ECO:0000318"/>
    <property type="project" value="GO_Central"/>
</dbReference>
<dbReference type="GO" id="GO:0003723">
    <property type="term" value="F:RNA binding"/>
    <property type="evidence" value="ECO:0000318"/>
    <property type="project" value="GO_Central"/>
</dbReference>
<dbReference type="GO" id="GO:0045292">
    <property type="term" value="P:mRNA cis splicing, via spliceosome"/>
    <property type="evidence" value="ECO:0000269"/>
    <property type="project" value="PomBase"/>
</dbReference>
<dbReference type="FunFam" id="1.10.10.790:FF:000002">
    <property type="entry name" value="Splicing factor 3A subunit 1"/>
    <property type="match status" value="1"/>
</dbReference>
<dbReference type="FunFam" id="1.10.10.790:FF:000001">
    <property type="entry name" value="Splicing factor 3a, subunit 1"/>
    <property type="match status" value="1"/>
</dbReference>
<dbReference type="Gene3D" id="1.10.10.790">
    <property type="entry name" value="Surp module"/>
    <property type="match status" value="2"/>
</dbReference>
<dbReference type="InterPro" id="IPR045146">
    <property type="entry name" value="SF3A1"/>
</dbReference>
<dbReference type="InterPro" id="IPR022030">
    <property type="entry name" value="SF3A1_dom"/>
</dbReference>
<dbReference type="InterPro" id="IPR000061">
    <property type="entry name" value="Surp"/>
</dbReference>
<dbReference type="InterPro" id="IPR035967">
    <property type="entry name" value="SWAP/Surp_sf"/>
</dbReference>
<dbReference type="PANTHER" id="PTHR15316">
    <property type="entry name" value="SPLICEOSOME ASSOCIATED PROTEIN 114/SWAP SPLICING FACTOR-RELATED"/>
    <property type="match status" value="1"/>
</dbReference>
<dbReference type="PANTHER" id="PTHR15316:SF1">
    <property type="entry name" value="SPLICING FACTOR 3A SUBUNIT 1"/>
    <property type="match status" value="1"/>
</dbReference>
<dbReference type="Pfam" id="PF12230">
    <property type="entry name" value="PRP21_like_P"/>
    <property type="match status" value="1"/>
</dbReference>
<dbReference type="Pfam" id="PF01805">
    <property type="entry name" value="Surp"/>
    <property type="match status" value="2"/>
</dbReference>
<dbReference type="SMART" id="SM00648">
    <property type="entry name" value="SWAP"/>
    <property type="match status" value="2"/>
</dbReference>
<dbReference type="SUPFAM" id="SSF109905">
    <property type="entry name" value="Surp module (SWAP domain)"/>
    <property type="match status" value="2"/>
</dbReference>
<dbReference type="PROSITE" id="PS50128">
    <property type="entry name" value="SURP"/>
    <property type="match status" value="2"/>
</dbReference>
<comment type="function">
    <text evidence="1">Involved in pre-mRNA splicing. May be involved in endoplasmic reticulum-associated protein degradation (ERAD) and required for growth at low and high temperatures (By similarity).</text>
</comment>
<comment type="subunit">
    <text evidence="3">Belongs to the 40S cdc5-associated complex (or cwf complex), a spliceosome sub-complex reminiscent of a late-stage spliceosome composed of the U2, U5 and U6 snRNAs and at least brr2, cdc5, cwf2/prp3, cwf3/syf1, cwf4/syf3, cwf5/ecm2, spp42/cwf6, cwf7/spf27, cwf8, cwf9, cwf10, cwf11, cwf12, prp45/cwf13, cwf14, cwf15, cwf16, cwf17, cwf18, cwf19, cwf20, cwf21, cwf22, cwf23, cwf24, cwf25, cwf26, cyp7/cwf27, cwf28, cwf29/ist3, lea1, msl1, prp5/cwf1, prp10, prp12/sap130, prp17, prp22, sap61, sap62, sap114, sap145, slu7, smb1, smd1, smd3, smf1, smg1 and syf2.</text>
</comment>
<comment type="subcellular location">
    <subcellularLocation>
        <location evidence="4">Nucleus</location>
    </subcellularLocation>
</comment>
<sequence length="481" mass="54409">MSSLMEFQDRNTTNNETEHQKSITDQSSSVPAGVILPPPAIREIIDKSASYVARNGPAFEEKIRQNEQANTKFAFLHANDPYHPYYQHKLTEAREGKLKSHATGLSTQKTSTLARPIQKPIEATIPAPSPYLFSEPLPSISSLDLDVLRLTARYAAVRGSSFLVSLSQKEWNNTQFDFLKPNNALYPYFMRIVQQYTSLIREPISSPEQELRENVRDPYSLLSKIQPRVRWQSHMESQKKKQKEEAEKEKLEYAQIDWNDFVVVEVIQFTKSDEHAKLAKPTNLADLQTATLEQKSAMFTMPDQNYTIEEAPPTAEPWEPISAPKKQEFGVSLPPSLASPEKGGISSTTSVSPAAQASPVLSTTTQPKVQKPVPKAFQPKVPMEISPFSGELVPATELEEHMRLKLLDPRWQEQRKVEESRKSTLNLENVNVAANMKRLVSQRTDLFDVQNGVEISQEEIERRKRAATQSAWGATPTNKRR</sequence>
<reference key="1">
    <citation type="journal article" date="2002" name="Nature">
        <title>The genome sequence of Schizosaccharomyces pombe.</title>
        <authorList>
            <person name="Wood V."/>
            <person name="Gwilliam R."/>
            <person name="Rajandream M.A."/>
            <person name="Lyne M.H."/>
            <person name="Lyne R."/>
            <person name="Stewart A."/>
            <person name="Sgouros J.G."/>
            <person name="Peat N."/>
            <person name="Hayles J."/>
            <person name="Baker S.G."/>
            <person name="Basham D."/>
            <person name="Bowman S."/>
            <person name="Brooks K."/>
            <person name="Brown D."/>
            <person name="Brown S."/>
            <person name="Chillingworth T."/>
            <person name="Churcher C.M."/>
            <person name="Collins M."/>
            <person name="Connor R."/>
            <person name="Cronin A."/>
            <person name="Davis P."/>
            <person name="Feltwell T."/>
            <person name="Fraser A."/>
            <person name="Gentles S."/>
            <person name="Goble A."/>
            <person name="Hamlin N."/>
            <person name="Harris D.E."/>
            <person name="Hidalgo J."/>
            <person name="Hodgson G."/>
            <person name="Holroyd S."/>
            <person name="Hornsby T."/>
            <person name="Howarth S."/>
            <person name="Huckle E.J."/>
            <person name="Hunt S."/>
            <person name="Jagels K."/>
            <person name="James K.D."/>
            <person name="Jones L."/>
            <person name="Jones M."/>
            <person name="Leather S."/>
            <person name="McDonald S."/>
            <person name="McLean J."/>
            <person name="Mooney P."/>
            <person name="Moule S."/>
            <person name="Mungall K.L."/>
            <person name="Murphy L.D."/>
            <person name="Niblett D."/>
            <person name="Odell C."/>
            <person name="Oliver K."/>
            <person name="O'Neil S."/>
            <person name="Pearson D."/>
            <person name="Quail M.A."/>
            <person name="Rabbinowitsch E."/>
            <person name="Rutherford K.M."/>
            <person name="Rutter S."/>
            <person name="Saunders D."/>
            <person name="Seeger K."/>
            <person name="Sharp S."/>
            <person name="Skelton J."/>
            <person name="Simmonds M.N."/>
            <person name="Squares R."/>
            <person name="Squares S."/>
            <person name="Stevens K."/>
            <person name="Taylor K."/>
            <person name="Taylor R.G."/>
            <person name="Tivey A."/>
            <person name="Walsh S.V."/>
            <person name="Warren T."/>
            <person name="Whitehead S."/>
            <person name="Woodward J.R."/>
            <person name="Volckaert G."/>
            <person name="Aert R."/>
            <person name="Robben J."/>
            <person name="Grymonprez B."/>
            <person name="Weltjens I."/>
            <person name="Vanstreels E."/>
            <person name="Rieger M."/>
            <person name="Schaefer M."/>
            <person name="Mueller-Auer S."/>
            <person name="Gabel C."/>
            <person name="Fuchs M."/>
            <person name="Duesterhoeft A."/>
            <person name="Fritzc C."/>
            <person name="Holzer E."/>
            <person name="Moestl D."/>
            <person name="Hilbert H."/>
            <person name="Borzym K."/>
            <person name="Langer I."/>
            <person name="Beck A."/>
            <person name="Lehrach H."/>
            <person name="Reinhardt R."/>
            <person name="Pohl T.M."/>
            <person name="Eger P."/>
            <person name="Zimmermann W."/>
            <person name="Wedler H."/>
            <person name="Wambutt R."/>
            <person name="Purnelle B."/>
            <person name="Goffeau A."/>
            <person name="Cadieu E."/>
            <person name="Dreano S."/>
            <person name="Gloux S."/>
            <person name="Lelaure V."/>
            <person name="Mottier S."/>
            <person name="Galibert F."/>
            <person name="Aves S.J."/>
            <person name="Xiang Z."/>
            <person name="Hunt C."/>
            <person name="Moore K."/>
            <person name="Hurst S.M."/>
            <person name="Lucas M."/>
            <person name="Rochet M."/>
            <person name="Gaillardin C."/>
            <person name="Tallada V.A."/>
            <person name="Garzon A."/>
            <person name="Thode G."/>
            <person name="Daga R.R."/>
            <person name="Cruzado L."/>
            <person name="Jimenez J."/>
            <person name="Sanchez M."/>
            <person name="del Rey F."/>
            <person name="Benito J."/>
            <person name="Dominguez A."/>
            <person name="Revuelta J.L."/>
            <person name="Moreno S."/>
            <person name="Armstrong J."/>
            <person name="Forsburg S.L."/>
            <person name="Cerutti L."/>
            <person name="Lowe T."/>
            <person name="McCombie W.R."/>
            <person name="Paulsen I."/>
            <person name="Potashkin J."/>
            <person name="Shpakovski G.V."/>
            <person name="Ussery D."/>
            <person name="Barrell B.G."/>
            <person name="Nurse P."/>
        </authorList>
    </citation>
    <scope>NUCLEOTIDE SEQUENCE [LARGE SCALE GENOMIC DNA]</scope>
    <source>
        <strain>972 / ATCC 24843</strain>
    </source>
</reference>
<reference key="2">
    <citation type="journal article" date="2002" name="Mol. Cell. Biol.">
        <title>Proteomics analysis reveals stable multiprotein complexes in both fission and budding yeasts containing Myb-related Cdc5p/Cef1p, novel pre-mRNA splicing factors, and snRNAs.</title>
        <authorList>
            <person name="Ohi M.D."/>
            <person name="Link A.J."/>
            <person name="Ren L."/>
            <person name="Jennings J.L."/>
            <person name="McDonald W.H."/>
            <person name="Gould K.L."/>
        </authorList>
    </citation>
    <scope>IDENTIFICATION IN THE CWF COMPLEX</scope>
    <scope>IDENTIFICATION BY MASS SPECTROMETRY</scope>
</reference>
<reference key="3">
    <citation type="journal article" date="2006" name="Nat. Biotechnol.">
        <title>ORFeome cloning and global analysis of protein localization in the fission yeast Schizosaccharomyces pombe.</title>
        <authorList>
            <person name="Matsuyama A."/>
            <person name="Arai R."/>
            <person name="Yashiroda Y."/>
            <person name="Shirai A."/>
            <person name="Kamata A."/>
            <person name="Sekido S."/>
            <person name="Kobayashi Y."/>
            <person name="Hashimoto A."/>
            <person name="Hamamoto M."/>
            <person name="Hiraoka Y."/>
            <person name="Horinouchi S."/>
            <person name="Yoshida M."/>
        </authorList>
    </citation>
    <scope>SUBCELLULAR LOCATION [LARGE SCALE ANALYSIS]</scope>
</reference>
<name>SA114_SCHPO</name>
<gene>
    <name type="primary">sap114</name>
    <name type="ORF">SPAC22A12.09c</name>
</gene>
<protein>
    <recommendedName>
        <fullName>Pre-mRNA-splicing factor sap114</fullName>
    </recommendedName>
    <alternativeName>
        <fullName>Spliceosome-associated protein 145</fullName>
    </alternativeName>
</protein>
<evidence type="ECO:0000250" key="1"/>
<evidence type="ECO:0000256" key="2">
    <source>
        <dbReference type="SAM" id="MobiDB-lite"/>
    </source>
</evidence>
<evidence type="ECO:0000269" key="3">
    <source>
    </source>
</evidence>
<evidence type="ECO:0000269" key="4">
    <source>
    </source>
</evidence>